<sequence>MGAPYDFAPERPDHIQQILDGLDRYNPETTGVFQDYVMQQCESQTYDCYANLALLKLYQFNPHLSRDETVTNILVKALTMFPSPDFALGLSLLPSHLLAPLNSSAHNPAAGDAPLSEAVQKLNELRNLLEGADYATFWSTLDSDDLYADLIADVSGFEELMRVRIAATVSQAVREVDRSILESWLNLEGSDFEHFVGSVCGWTIEGAKIKVPMNKDNEAKGTVVRENVKFDQFARVIKRAYEQPA</sequence>
<feature type="chain" id="PRO_0000365063" description="Eukaryotic translation initiation factor 3 subunit K">
    <location>
        <begin position="1"/>
        <end position="245"/>
    </location>
</feature>
<feature type="domain" description="PCI" evidence="2">
    <location>
        <begin position="46"/>
        <end position="227"/>
    </location>
</feature>
<dbReference type="EMBL" id="CH445364">
    <property type="protein sequence ID" value="EAT76822.1"/>
    <property type="molecule type" value="Genomic_DNA"/>
</dbReference>
<dbReference type="RefSeq" id="XP_001805865.1">
    <property type="nucleotide sequence ID" value="XM_001805813.1"/>
</dbReference>
<dbReference type="SMR" id="Q0TXH0"/>
<dbReference type="STRING" id="321614.Q0TXH0"/>
<dbReference type="EnsemblFungi" id="SNOT_15727">
    <property type="protein sequence ID" value="SNOT_15727"/>
    <property type="gene ID" value="SNOG_15727"/>
</dbReference>
<dbReference type="GeneID" id="5982795"/>
<dbReference type="KEGG" id="pno:SNOG_15727"/>
<dbReference type="VEuPathDB" id="FungiDB:JI435_157270"/>
<dbReference type="eggNOG" id="KOG3252">
    <property type="taxonomic scope" value="Eukaryota"/>
</dbReference>
<dbReference type="HOGENOM" id="CLU_076723_0_1_1"/>
<dbReference type="InParanoid" id="Q0TXH0"/>
<dbReference type="OMA" id="GDDLCAD"/>
<dbReference type="OrthoDB" id="337745at2759"/>
<dbReference type="Proteomes" id="UP000001055">
    <property type="component" value="Unassembled WGS sequence"/>
</dbReference>
<dbReference type="GO" id="GO:0016282">
    <property type="term" value="C:eukaryotic 43S preinitiation complex"/>
    <property type="evidence" value="ECO:0007669"/>
    <property type="project" value="UniProtKB-UniRule"/>
</dbReference>
<dbReference type="GO" id="GO:0033290">
    <property type="term" value="C:eukaryotic 48S preinitiation complex"/>
    <property type="evidence" value="ECO:0007669"/>
    <property type="project" value="UniProtKB-UniRule"/>
</dbReference>
<dbReference type="GO" id="GO:0005852">
    <property type="term" value="C:eukaryotic translation initiation factor 3 complex"/>
    <property type="evidence" value="ECO:0000318"/>
    <property type="project" value="GO_Central"/>
</dbReference>
<dbReference type="GO" id="GO:0043022">
    <property type="term" value="F:ribosome binding"/>
    <property type="evidence" value="ECO:0007669"/>
    <property type="project" value="InterPro"/>
</dbReference>
<dbReference type="GO" id="GO:0003723">
    <property type="term" value="F:RNA binding"/>
    <property type="evidence" value="ECO:0007669"/>
    <property type="project" value="UniProtKB-UniRule"/>
</dbReference>
<dbReference type="GO" id="GO:0003743">
    <property type="term" value="F:translation initiation factor activity"/>
    <property type="evidence" value="ECO:0007669"/>
    <property type="project" value="UniProtKB-UniRule"/>
</dbReference>
<dbReference type="GO" id="GO:0001732">
    <property type="term" value="P:formation of cytoplasmic translation initiation complex"/>
    <property type="evidence" value="ECO:0007669"/>
    <property type="project" value="UniProtKB-UniRule"/>
</dbReference>
<dbReference type="GO" id="GO:0006446">
    <property type="term" value="P:regulation of translational initiation"/>
    <property type="evidence" value="ECO:0007669"/>
    <property type="project" value="InterPro"/>
</dbReference>
<dbReference type="FunFam" id="1.10.10.10:FF:000389">
    <property type="entry name" value="Eukaryotic translation initiation factor 3 subunit K"/>
    <property type="match status" value="1"/>
</dbReference>
<dbReference type="FunFam" id="1.25.40.250:FF:000003">
    <property type="entry name" value="Eukaryotic translation initiation factor 3 subunit K"/>
    <property type="match status" value="1"/>
</dbReference>
<dbReference type="Gene3D" id="1.25.40.250">
    <property type="entry name" value="ARM repeat, domain 1"/>
    <property type="match status" value="1"/>
</dbReference>
<dbReference type="Gene3D" id="1.10.10.10">
    <property type="entry name" value="Winged helix-like DNA-binding domain superfamily/Winged helix DNA-binding domain"/>
    <property type="match status" value="1"/>
</dbReference>
<dbReference type="HAMAP" id="MF_03010">
    <property type="entry name" value="eIF3k"/>
    <property type="match status" value="1"/>
</dbReference>
<dbReference type="InterPro" id="IPR016024">
    <property type="entry name" value="ARM-type_fold"/>
</dbReference>
<dbReference type="InterPro" id="IPR033464">
    <property type="entry name" value="CSN8_PSD8_EIF3K"/>
</dbReference>
<dbReference type="InterPro" id="IPR009374">
    <property type="entry name" value="eIF3k"/>
</dbReference>
<dbReference type="InterPro" id="IPR000717">
    <property type="entry name" value="PCI_dom"/>
</dbReference>
<dbReference type="InterPro" id="IPR016020">
    <property type="entry name" value="Transl_init_fac_sub12_N_euk"/>
</dbReference>
<dbReference type="InterPro" id="IPR036388">
    <property type="entry name" value="WH-like_DNA-bd_sf"/>
</dbReference>
<dbReference type="InterPro" id="IPR036390">
    <property type="entry name" value="WH_DNA-bd_sf"/>
</dbReference>
<dbReference type="PANTHER" id="PTHR13022">
    <property type="entry name" value="EUKARYOTIC TRANSLATION INITIATION FACTOR 3 SUBUNIT 11"/>
    <property type="match status" value="1"/>
</dbReference>
<dbReference type="PANTHER" id="PTHR13022:SF0">
    <property type="entry name" value="EUKARYOTIC TRANSLATION INITIATION FACTOR 3 SUBUNIT K"/>
    <property type="match status" value="1"/>
</dbReference>
<dbReference type="Pfam" id="PF10075">
    <property type="entry name" value="CSN8_PSD8_EIF3K"/>
    <property type="match status" value="1"/>
</dbReference>
<dbReference type="SUPFAM" id="SSF48371">
    <property type="entry name" value="ARM repeat"/>
    <property type="match status" value="1"/>
</dbReference>
<dbReference type="SUPFAM" id="SSF46785">
    <property type="entry name" value="Winged helix' DNA-binding domain"/>
    <property type="match status" value="1"/>
</dbReference>
<dbReference type="PROSITE" id="PS50250">
    <property type="entry name" value="PCI"/>
    <property type="match status" value="1"/>
</dbReference>
<keyword id="KW-0963">Cytoplasm</keyword>
<keyword id="KW-0396">Initiation factor</keyword>
<keyword id="KW-0648">Protein biosynthesis</keyword>
<comment type="function">
    <text evidence="1">Component of the eukaryotic translation initiation factor 3 (eIF-3) complex, which is involved in protein synthesis of a specialized repertoire of mRNAs and, together with other initiation factors, stimulates binding of mRNA and methionyl-tRNAi to the 40S ribosome. The eIF-3 complex specifically targets and initiates translation of a subset of mRNAs involved in cell proliferation.</text>
</comment>
<comment type="subunit">
    <text evidence="1">Component of the eukaryotic translation initiation factor 3 (eIF-3) complex.</text>
</comment>
<comment type="subcellular location">
    <subcellularLocation>
        <location evidence="1">Cytoplasm</location>
    </subcellularLocation>
</comment>
<comment type="similarity">
    <text evidence="1">Belongs to the eIF-3 subunit K family.</text>
</comment>
<accession>Q0TXH0</accession>
<proteinExistence type="inferred from homology"/>
<reference key="1">
    <citation type="journal article" date="2007" name="Plant Cell">
        <title>Dothideomycete-plant interactions illuminated by genome sequencing and EST analysis of the wheat pathogen Stagonospora nodorum.</title>
        <authorList>
            <person name="Hane J.K."/>
            <person name="Lowe R.G.T."/>
            <person name="Solomon P.S."/>
            <person name="Tan K.-C."/>
            <person name="Schoch C.L."/>
            <person name="Spatafora J.W."/>
            <person name="Crous P.W."/>
            <person name="Kodira C.D."/>
            <person name="Birren B.W."/>
            <person name="Galagan J.E."/>
            <person name="Torriani S.F.F."/>
            <person name="McDonald B.A."/>
            <person name="Oliver R.P."/>
        </authorList>
    </citation>
    <scope>NUCLEOTIDE SEQUENCE [LARGE SCALE GENOMIC DNA]</scope>
    <source>
        <strain>SN15 / ATCC MYA-4574 / FGSC 10173</strain>
    </source>
</reference>
<protein>
    <recommendedName>
        <fullName evidence="1">Eukaryotic translation initiation factor 3 subunit K</fullName>
        <shortName evidence="1">eIF3k</shortName>
    </recommendedName>
    <alternativeName>
        <fullName evidence="1">eIF-3 p25</fullName>
    </alternativeName>
</protein>
<evidence type="ECO:0000255" key="1">
    <source>
        <dbReference type="HAMAP-Rule" id="MF_03010"/>
    </source>
</evidence>
<evidence type="ECO:0000255" key="2">
    <source>
        <dbReference type="PROSITE-ProRule" id="PRU01185"/>
    </source>
</evidence>
<organism>
    <name type="scientific">Phaeosphaeria nodorum (strain SN15 / ATCC MYA-4574 / FGSC 10173)</name>
    <name type="common">Glume blotch fungus</name>
    <name type="synonym">Parastagonospora nodorum</name>
    <dbReference type="NCBI Taxonomy" id="321614"/>
    <lineage>
        <taxon>Eukaryota</taxon>
        <taxon>Fungi</taxon>
        <taxon>Dikarya</taxon>
        <taxon>Ascomycota</taxon>
        <taxon>Pezizomycotina</taxon>
        <taxon>Dothideomycetes</taxon>
        <taxon>Pleosporomycetidae</taxon>
        <taxon>Pleosporales</taxon>
        <taxon>Pleosporineae</taxon>
        <taxon>Phaeosphaeriaceae</taxon>
        <taxon>Parastagonospora</taxon>
    </lineage>
</organism>
<name>EIF3K_PHANO</name>
<gene>
    <name type="ORF">SNOG_15727</name>
</gene>